<accession>Q983I0</accession>
<dbReference type="EC" id="4.3.1.3" evidence="1"/>
<dbReference type="EMBL" id="BA000012">
    <property type="protein sequence ID" value="BAB53901.1"/>
    <property type="molecule type" value="Genomic_DNA"/>
</dbReference>
<dbReference type="RefSeq" id="WP_010915527.1">
    <property type="nucleotide sequence ID" value="NC_002678.2"/>
</dbReference>
<dbReference type="SMR" id="Q983I0"/>
<dbReference type="GeneID" id="66684640"/>
<dbReference type="KEGG" id="mlo:mlr8321"/>
<dbReference type="eggNOG" id="COG2986">
    <property type="taxonomic scope" value="Bacteria"/>
</dbReference>
<dbReference type="HOGENOM" id="CLU_014801_4_0_5"/>
<dbReference type="UniPathway" id="UPA00379">
    <property type="reaction ID" value="UER00549"/>
</dbReference>
<dbReference type="Proteomes" id="UP000000552">
    <property type="component" value="Chromosome"/>
</dbReference>
<dbReference type="GO" id="GO:0005737">
    <property type="term" value="C:cytoplasm"/>
    <property type="evidence" value="ECO:0007669"/>
    <property type="project" value="UniProtKB-SubCell"/>
</dbReference>
<dbReference type="GO" id="GO:0004397">
    <property type="term" value="F:histidine ammonia-lyase activity"/>
    <property type="evidence" value="ECO:0007669"/>
    <property type="project" value="UniProtKB-UniRule"/>
</dbReference>
<dbReference type="GO" id="GO:0019556">
    <property type="term" value="P:L-histidine catabolic process to glutamate and formamide"/>
    <property type="evidence" value="ECO:0007669"/>
    <property type="project" value="UniProtKB-UniPathway"/>
</dbReference>
<dbReference type="GO" id="GO:0019557">
    <property type="term" value="P:L-histidine catabolic process to glutamate and formate"/>
    <property type="evidence" value="ECO:0007669"/>
    <property type="project" value="UniProtKB-UniPathway"/>
</dbReference>
<dbReference type="CDD" id="cd00332">
    <property type="entry name" value="PAL-HAL"/>
    <property type="match status" value="1"/>
</dbReference>
<dbReference type="FunFam" id="1.10.275.10:FF:000005">
    <property type="entry name" value="Histidine ammonia-lyase"/>
    <property type="match status" value="1"/>
</dbReference>
<dbReference type="FunFam" id="1.20.200.10:FF:000003">
    <property type="entry name" value="Histidine ammonia-lyase"/>
    <property type="match status" value="1"/>
</dbReference>
<dbReference type="Gene3D" id="1.20.200.10">
    <property type="entry name" value="Fumarase/aspartase (Central domain)"/>
    <property type="match status" value="1"/>
</dbReference>
<dbReference type="Gene3D" id="1.10.275.10">
    <property type="entry name" value="Fumarase/aspartase (N-terminal domain)"/>
    <property type="match status" value="1"/>
</dbReference>
<dbReference type="HAMAP" id="MF_00229">
    <property type="entry name" value="His_ammonia_lyase"/>
    <property type="match status" value="1"/>
</dbReference>
<dbReference type="InterPro" id="IPR001106">
    <property type="entry name" value="Aromatic_Lyase"/>
</dbReference>
<dbReference type="InterPro" id="IPR024083">
    <property type="entry name" value="Fumarase/histidase_N"/>
</dbReference>
<dbReference type="InterPro" id="IPR005921">
    <property type="entry name" value="HutH"/>
</dbReference>
<dbReference type="InterPro" id="IPR008948">
    <property type="entry name" value="L-Aspartase-like"/>
</dbReference>
<dbReference type="InterPro" id="IPR022313">
    <property type="entry name" value="Phe/His_NH3-lyase_AS"/>
</dbReference>
<dbReference type="NCBIfam" id="TIGR01225">
    <property type="entry name" value="hutH"/>
    <property type="match status" value="1"/>
</dbReference>
<dbReference type="NCBIfam" id="NF006871">
    <property type="entry name" value="PRK09367.1"/>
    <property type="match status" value="1"/>
</dbReference>
<dbReference type="PANTHER" id="PTHR10362">
    <property type="entry name" value="HISTIDINE AMMONIA-LYASE"/>
    <property type="match status" value="1"/>
</dbReference>
<dbReference type="Pfam" id="PF00221">
    <property type="entry name" value="Lyase_aromatic"/>
    <property type="match status" value="1"/>
</dbReference>
<dbReference type="SUPFAM" id="SSF48557">
    <property type="entry name" value="L-aspartase-like"/>
    <property type="match status" value="1"/>
</dbReference>
<dbReference type="PROSITE" id="PS00488">
    <property type="entry name" value="PAL_HISTIDASE"/>
    <property type="match status" value="1"/>
</dbReference>
<keyword id="KW-0963">Cytoplasm</keyword>
<keyword id="KW-0369">Histidine metabolism</keyword>
<keyword id="KW-0456">Lyase</keyword>
<evidence type="ECO:0000255" key="1">
    <source>
        <dbReference type="HAMAP-Rule" id="MF_00229"/>
    </source>
</evidence>
<proteinExistence type="inferred from homology"/>
<feature type="chain" id="PRO_0000161021" description="Histidine ammonia-lyase">
    <location>
        <begin position="1"/>
        <end position="513"/>
    </location>
</feature>
<feature type="modified residue" description="2,3-didehydroalanine (Ser)" evidence="1">
    <location>
        <position position="143"/>
    </location>
</feature>
<feature type="cross-link" description="5-imidazolinone (Ala-Gly)" evidence="1">
    <location>
        <begin position="142"/>
        <end position="144"/>
    </location>
</feature>
<organism>
    <name type="scientific">Mesorhizobium japonicum (strain LMG 29417 / CECT 9101 / MAFF 303099)</name>
    <name type="common">Mesorhizobium loti (strain MAFF 303099)</name>
    <dbReference type="NCBI Taxonomy" id="266835"/>
    <lineage>
        <taxon>Bacteria</taxon>
        <taxon>Pseudomonadati</taxon>
        <taxon>Pseudomonadota</taxon>
        <taxon>Alphaproteobacteria</taxon>
        <taxon>Hyphomicrobiales</taxon>
        <taxon>Phyllobacteriaceae</taxon>
        <taxon>Mesorhizobium</taxon>
    </lineage>
</organism>
<name>HUTH_RHILO</name>
<reference key="1">
    <citation type="journal article" date="2000" name="DNA Res.">
        <title>Complete genome structure of the nitrogen-fixing symbiotic bacterium Mesorhizobium loti.</title>
        <authorList>
            <person name="Kaneko T."/>
            <person name="Nakamura Y."/>
            <person name="Sato S."/>
            <person name="Asamizu E."/>
            <person name="Kato T."/>
            <person name="Sasamoto S."/>
            <person name="Watanabe A."/>
            <person name="Idesawa K."/>
            <person name="Ishikawa A."/>
            <person name="Kawashima K."/>
            <person name="Kimura T."/>
            <person name="Kishida Y."/>
            <person name="Kiyokawa C."/>
            <person name="Kohara M."/>
            <person name="Matsumoto M."/>
            <person name="Matsuno A."/>
            <person name="Mochizuki Y."/>
            <person name="Nakayama S."/>
            <person name="Nakazaki N."/>
            <person name="Shimpo S."/>
            <person name="Sugimoto M."/>
            <person name="Takeuchi C."/>
            <person name="Yamada M."/>
            <person name="Tabata S."/>
        </authorList>
    </citation>
    <scope>NUCLEOTIDE SEQUENCE [LARGE SCALE GENOMIC DNA]</scope>
    <source>
        <strain>LMG 29417 / CECT 9101 / MAFF 303099</strain>
    </source>
</reference>
<comment type="catalytic activity">
    <reaction evidence="1">
        <text>L-histidine = trans-urocanate + NH4(+)</text>
        <dbReference type="Rhea" id="RHEA:21232"/>
        <dbReference type="ChEBI" id="CHEBI:17771"/>
        <dbReference type="ChEBI" id="CHEBI:28938"/>
        <dbReference type="ChEBI" id="CHEBI:57595"/>
        <dbReference type="EC" id="4.3.1.3"/>
    </reaction>
</comment>
<comment type="pathway">
    <text evidence="1">Amino-acid degradation; L-histidine degradation into L-glutamate; N-formimidoyl-L-glutamate from L-histidine: step 1/3.</text>
</comment>
<comment type="subcellular location">
    <subcellularLocation>
        <location evidence="1">Cytoplasm</location>
    </subcellularLocation>
</comment>
<comment type="PTM">
    <text evidence="1">Contains an active site 4-methylidene-imidazol-5-one (MIO), which is formed autocatalytically by cyclization and dehydration of residues Ala-Ser-Gly.</text>
</comment>
<comment type="similarity">
    <text evidence="1">Belongs to the PAL/histidase family.</text>
</comment>
<gene>
    <name evidence="1" type="primary">hutH</name>
    <name type="ordered locus">mlr8321</name>
</gene>
<sequence length="513" mass="53469">MTELTLKPGNATLADWRAIYRGAVPKLDEACRPKIKASAEAVARIVAKGEPVYGINTGFGKLASVRIPAGDLETLQRNIVLSHAAGVGEPMPVAIARLMMALKLASLAQGASGVRPETIDLLQAMLANDVIPVVPAQGSVGASGDLAPLSHMTAVMIGVGECFTPHGRFPAKVAFVSHGLEPVTLGAKEGLALLNGTQFSTAYALAALFEAEVLYQSALVAGALSTDAAKGSDAPFDPRIHLLRKHRGQIETAEALRNLMAGSAIRESHRVGDERVQDPYCLRCQPQVMGAALDVLRKAADTLGTEANGVTDNPLIFAEDDTALSGGNFHAEPVAFAADMIALAVCEIGSLSERRIAMLVDPALSGMPAFLTPKPGLNSGFMIPQVTAAALVSENKQKAYPASVDSIPTSANQEDHVSMAAHGARRLIGMVENATAVIGIELLAAAQGCDFHQPLASSDALEAVRKLVRAEVPHLDNDRHFHPDMEKAIAMVRSGATVRAAGAVALPSIAGAA</sequence>
<protein>
    <recommendedName>
        <fullName evidence="1">Histidine ammonia-lyase</fullName>
        <shortName evidence="1">Histidase</shortName>
        <ecNumber evidence="1">4.3.1.3</ecNumber>
    </recommendedName>
</protein>